<evidence type="ECO:0000255" key="1"/>
<evidence type="ECO:0000305" key="2"/>
<gene>
    <name type="ORF">SPAC1071.03c</name>
</gene>
<proteinExistence type="predicted"/>
<comment type="subcellular location">
    <subcellularLocation>
        <location evidence="2">Membrane</location>
        <topology evidence="2">Single-pass membrane protein</topology>
    </subcellularLocation>
</comment>
<name>YL33_SCHPO</name>
<protein>
    <recommendedName>
        <fullName>Uncharacterized protein C1071.03c</fullName>
    </recommendedName>
</protein>
<organism>
    <name type="scientific">Schizosaccharomyces pombe (strain 972 / ATCC 24843)</name>
    <name type="common">Fission yeast</name>
    <dbReference type="NCBI Taxonomy" id="284812"/>
    <lineage>
        <taxon>Eukaryota</taxon>
        <taxon>Fungi</taxon>
        <taxon>Dikarya</taxon>
        <taxon>Ascomycota</taxon>
        <taxon>Taphrinomycotina</taxon>
        <taxon>Schizosaccharomycetes</taxon>
        <taxon>Schizosaccharomycetales</taxon>
        <taxon>Schizosaccharomycetaceae</taxon>
        <taxon>Schizosaccharomyces</taxon>
    </lineage>
</organism>
<accession>Q9UTR0</accession>
<reference key="1">
    <citation type="journal article" date="2002" name="Nature">
        <title>The genome sequence of Schizosaccharomyces pombe.</title>
        <authorList>
            <person name="Wood V."/>
            <person name="Gwilliam R."/>
            <person name="Rajandream M.A."/>
            <person name="Lyne M.H."/>
            <person name="Lyne R."/>
            <person name="Stewart A."/>
            <person name="Sgouros J.G."/>
            <person name="Peat N."/>
            <person name="Hayles J."/>
            <person name="Baker S.G."/>
            <person name="Basham D."/>
            <person name="Bowman S."/>
            <person name="Brooks K."/>
            <person name="Brown D."/>
            <person name="Brown S."/>
            <person name="Chillingworth T."/>
            <person name="Churcher C.M."/>
            <person name="Collins M."/>
            <person name="Connor R."/>
            <person name="Cronin A."/>
            <person name="Davis P."/>
            <person name="Feltwell T."/>
            <person name="Fraser A."/>
            <person name="Gentles S."/>
            <person name="Goble A."/>
            <person name="Hamlin N."/>
            <person name="Harris D.E."/>
            <person name="Hidalgo J."/>
            <person name="Hodgson G."/>
            <person name="Holroyd S."/>
            <person name="Hornsby T."/>
            <person name="Howarth S."/>
            <person name="Huckle E.J."/>
            <person name="Hunt S."/>
            <person name="Jagels K."/>
            <person name="James K.D."/>
            <person name="Jones L."/>
            <person name="Jones M."/>
            <person name="Leather S."/>
            <person name="McDonald S."/>
            <person name="McLean J."/>
            <person name="Mooney P."/>
            <person name="Moule S."/>
            <person name="Mungall K.L."/>
            <person name="Murphy L.D."/>
            <person name="Niblett D."/>
            <person name="Odell C."/>
            <person name="Oliver K."/>
            <person name="O'Neil S."/>
            <person name="Pearson D."/>
            <person name="Quail M.A."/>
            <person name="Rabbinowitsch E."/>
            <person name="Rutherford K.M."/>
            <person name="Rutter S."/>
            <person name="Saunders D."/>
            <person name="Seeger K."/>
            <person name="Sharp S."/>
            <person name="Skelton J."/>
            <person name="Simmonds M.N."/>
            <person name="Squares R."/>
            <person name="Squares S."/>
            <person name="Stevens K."/>
            <person name="Taylor K."/>
            <person name="Taylor R.G."/>
            <person name="Tivey A."/>
            <person name="Walsh S.V."/>
            <person name="Warren T."/>
            <person name="Whitehead S."/>
            <person name="Woodward J.R."/>
            <person name="Volckaert G."/>
            <person name="Aert R."/>
            <person name="Robben J."/>
            <person name="Grymonprez B."/>
            <person name="Weltjens I."/>
            <person name="Vanstreels E."/>
            <person name="Rieger M."/>
            <person name="Schaefer M."/>
            <person name="Mueller-Auer S."/>
            <person name="Gabel C."/>
            <person name="Fuchs M."/>
            <person name="Duesterhoeft A."/>
            <person name="Fritzc C."/>
            <person name="Holzer E."/>
            <person name="Moestl D."/>
            <person name="Hilbert H."/>
            <person name="Borzym K."/>
            <person name="Langer I."/>
            <person name="Beck A."/>
            <person name="Lehrach H."/>
            <person name="Reinhardt R."/>
            <person name="Pohl T.M."/>
            <person name="Eger P."/>
            <person name="Zimmermann W."/>
            <person name="Wedler H."/>
            <person name="Wambutt R."/>
            <person name="Purnelle B."/>
            <person name="Goffeau A."/>
            <person name="Cadieu E."/>
            <person name="Dreano S."/>
            <person name="Gloux S."/>
            <person name="Lelaure V."/>
            <person name="Mottier S."/>
            <person name="Galibert F."/>
            <person name="Aves S.J."/>
            <person name="Xiang Z."/>
            <person name="Hunt C."/>
            <person name="Moore K."/>
            <person name="Hurst S.M."/>
            <person name="Lucas M."/>
            <person name="Rochet M."/>
            <person name="Gaillardin C."/>
            <person name="Tallada V.A."/>
            <person name="Garzon A."/>
            <person name="Thode G."/>
            <person name="Daga R.R."/>
            <person name="Cruzado L."/>
            <person name="Jimenez J."/>
            <person name="Sanchez M."/>
            <person name="del Rey F."/>
            <person name="Benito J."/>
            <person name="Dominguez A."/>
            <person name="Revuelta J.L."/>
            <person name="Moreno S."/>
            <person name="Armstrong J."/>
            <person name="Forsburg S.L."/>
            <person name="Cerutti L."/>
            <person name="Lowe T."/>
            <person name="McCombie W.R."/>
            <person name="Paulsen I."/>
            <person name="Potashkin J."/>
            <person name="Shpakovski G.V."/>
            <person name="Ussery D."/>
            <person name="Barrell B.G."/>
            <person name="Nurse P."/>
        </authorList>
    </citation>
    <scope>NUCLEOTIDE SEQUENCE [LARGE SCALE GENOMIC DNA]</scope>
    <source>
        <strain>972 / ATCC 24843</strain>
    </source>
</reference>
<dbReference type="EMBL" id="CU329670">
    <property type="protein sequence ID" value="CAB59879.1"/>
    <property type="molecule type" value="Genomic_DNA"/>
</dbReference>
<dbReference type="PIR" id="T37485">
    <property type="entry name" value="T37485"/>
</dbReference>
<dbReference type="SMR" id="Q9UTR0"/>
<dbReference type="BioGRID" id="279403">
    <property type="interactions" value="13"/>
</dbReference>
<dbReference type="FunCoup" id="Q9UTR0">
    <property type="interactions" value="150"/>
</dbReference>
<dbReference type="PaxDb" id="4896-SPAC1071.03c.1"/>
<dbReference type="EnsemblFungi" id="SPAC1071.03c.1">
    <property type="protein sequence ID" value="SPAC1071.03c.1:pep"/>
    <property type="gene ID" value="SPAC1071.03c"/>
</dbReference>
<dbReference type="KEGG" id="spo:2542963"/>
<dbReference type="PomBase" id="SPAC1071.03c"/>
<dbReference type="VEuPathDB" id="FungiDB:SPAC1071.03c"/>
<dbReference type="HOGENOM" id="CLU_906604_0_0_1"/>
<dbReference type="InParanoid" id="Q9UTR0"/>
<dbReference type="OMA" id="YEWLNDD"/>
<dbReference type="PRO" id="PR:Q9UTR0"/>
<dbReference type="Proteomes" id="UP000002485">
    <property type="component" value="Chromosome I"/>
</dbReference>
<dbReference type="GO" id="GO:0005783">
    <property type="term" value="C:endoplasmic reticulum"/>
    <property type="evidence" value="ECO:0000318"/>
    <property type="project" value="GO_Central"/>
</dbReference>
<dbReference type="GO" id="GO:0016020">
    <property type="term" value="C:membrane"/>
    <property type="evidence" value="ECO:0007669"/>
    <property type="project" value="UniProtKB-SubCell"/>
</dbReference>
<dbReference type="GO" id="GO:0000774">
    <property type="term" value="F:adenyl-nucleotide exchange factor activity"/>
    <property type="evidence" value="ECO:0000318"/>
    <property type="project" value="GO_Central"/>
</dbReference>
<dbReference type="GO" id="GO:0006616">
    <property type="term" value="P:SRP-dependent cotranslational protein targeting to membrane, translocation"/>
    <property type="evidence" value="ECO:0000266"/>
    <property type="project" value="PomBase"/>
</dbReference>
<dbReference type="Gene3D" id="1.25.10.10">
    <property type="entry name" value="Leucine-rich Repeat Variant"/>
    <property type="match status" value="1"/>
</dbReference>
<dbReference type="InterPro" id="IPR011989">
    <property type="entry name" value="ARM-like"/>
</dbReference>
<dbReference type="InterPro" id="IPR016024">
    <property type="entry name" value="ARM-type_fold"/>
</dbReference>
<dbReference type="InterPro" id="IPR050693">
    <property type="entry name" value="Hsp70_NEF-Inhibitors"/>
</dbReference>
<dbReference type="PANTHER" id="PTHR19316:SF18">
    <property type="entry name" value="HSP70-BINDING PROTEIN 1"/>
    <property type="match status" value="1"/>
</dbReference>
<dbReference type="PANTHER" id="PTHR19316">
    <property type="entry name" value="PROTEIN FOLDING REGULATOR"/>
    <property type="match status" value="1"/>
</dbReference>
<dbReference type="SUPFAM" id="SSF48371">
    <property type="entry name" value="ARM repeat"/>
    <property type="match status" value="1"/>
</dbReference>
<sequence>MFSILGNSSKKKRNTQIYRIFFTLTFSLSNLFLAICYLFLNVRTVSSDSSVSLYDRQLFDQSSSVILNPDTSDPSIVLSSLETMRDLAHDIKFGQDVLEQPLCDQLFVLMDGKDYPNTIRSMSSVVLASALSNNFIAQKKALEMNIMPKIVNTLRQENHPVTLLKKLFLLSKSVQSFPLSEAFISKDLGSAILLQLYDFWSRNSHIDIPSAFQEKLLSRLSIIFENIARSLENVNFSKASKVIPIEWVFSTWCSIFQKYLMNNWHLRSISTLEVLLNTVSTIQSVSESCPEVNFYEWLNDKNLAYKNKLIYQDPDLATEFNLIIKEALSLPWPKKYNI</sequence>
<keyword id="KW-0472">Membrane</keyword>
<keyword id="KW-1185">Reference proteome</keyword>
<keyword id="KW-0812">Transmembrane</keyword>
<keyword id="KW-1133">Transmembrane helix</keyword>
<feature type="chain" id="PRO_0000116839" description="Uncharacterized protein C1071.03c">
    <location>
        <begin position="1"/>
        <end position="338"/>
    </location>
</feature>
<feature type="transmembrane region" description="Helical" evidence="1">
    <location>
        <begin position="20"/>
        <end position="40"/>
    </location>
</feature>